<accession>O58741</accession>
<protein>
    <recommendedName>
        <fullName>Uncharacterized HTH-type transcriptional regulator PH1013</fullName>
    </recommendedName>
</protein>
<feature type="chain" id="PRO_0000111765" description="Uncharacterized HTH-type transcriptional regulator PH1013">
    <location>
        <begin position="1"/>
        <end position="162"/>
    </location>
</feature>
<feature type="domain" description="HTH asnC-type" evidence="1">
    <location>
        <begin position="6"/>
        <end position="99"/>
    </location>
</feature>
<feature type="DNA-binding region" description="H-T-H motif" evidence="1">
    <location>
        <begin position="25"/>
        <end position="44"/>
    </location>
</feature>
<sequence>MISTPLDDLDRAILKLLKKDARLTIAEISNQLKKPESTVHFRIKKLQERGVIEKYTIILGEPIRPRELALVVLEVDKPIIEDFLDRYMEYVTKTLSGFPEVLFVAKSGKEKIVALVGGEDRDKLLKFIEENIESIPTLRSVQVLPISEIKKGDEISGFLAEV</sequence>
<dbReference type="EMBL" id="BA000001">
    <property type="protein sequence ID" value="BAA30110.1"/>
    <property type="molecule type" value="Genomic_DNA"/>
</dbReference>
<dbReference type="PIR" id="H71093">
    <property type="entry name" value="H71093"/>
</dbReference>
<dbReference type="RefSeq" id="WP_010885099.1">
    <property type="nucleotide sequence ID" value="NC_000961.1"/>
</dbReference>
<dbReference type="SMR" id="O58741"/>
<dbReference type="STRING" id="70601.gene:9377970"/>
<dbReference type="EnsemblBacteria" id="BAA30110">
    <property type="protein sequence ID" value="BAA30110"/>
    <property type="gene ID" value="BAA30110"/>
</dbReference>
<dbReference type="GeneID" id="1443334"/>
<dbReference type="KEGG" id="pho:PH1013"/>
<dbReference type="eggNOG" id="arCOG01585">
    <property type="taxonomic scope" value="Archaea"/>
</dbReference>
<dbReference type="OrthoDB" id="6762at2157"/>
<dbReference type="Proteomes" id="UP000000752">
    <property type="component" value="Chromosome"/>
</dbReference>
<dbReference type="GO" id="GO:0043565">
    <property type="term" value="F:sequence-specific DNA binding"/>
    <property type="evidence" value="ECO:0007669"/>
    <property type="project" value="InterPro"/>
</dbReference>
<dbReference type="CDD" id="cd00090">
    <property type="entry name" value="HTH_ARSR"/>
    <property type="match status" value="1"/>
</dbReference>
<dbReference type="Gene3D" id="3.30.70.920">
    <property type="match status" value="1"/>
</dbReference>
<dbReference type="Gene3D" id="1.10.10.10">
    <property type="entry name" value="Winged helix-like DNA-binding domain superfamily/Winged helix DNA-binding domain"/>
    <property type="match status" value="1"/>
</dbReference>
<dbReference type="InterPro" id="IPR011991">
    <property type="entry name" value="ArsR-like_HTH"/>
</dbReference>
<dbReference type="InterPro" id="IPR000485">
    <property type="entry name" value="AsnC-type_HTH_dom"/>
</dbReference>
<dbReference type="InterPro" id="IPR050684">
    <property type="entry name" value="HTH-Siroheme_Decarb"/>
</dbReference>
<dbReference type="InterPro" id="IPR054609">
    <property type="entry name" value="PF0864-like_C"/>
</dbReference>
<dbReference type="InterPro" id="IPR019888">
    <property type="entry name" value="Tscrpt_reg_AsnC-like"/>
</dbReference>
<dbReference type="InterPro" id="IPR036388">
    <property type="entry name" value="WH-like_DNA-bd_sf"/>
</dbReference>
<dbReference type="InterPro" id="IPR036390">
    <property type="entry name" value="WH_DNA-bd_sf"/>
</dbReference>
<dbReference type="PANTHER" id="PTHR43413:SF7">
    <property type="entry name" value="HTH-TYPE TRANSCRIPTIONAL REGULATOR PTR2"/>
    <property type="match status" value="1"/>
</dbReference>
<dbReference type="PANTHER" id="PTHR43413">
    <property type="entry name" value="TRANSCRIPTIONAL REGULATOR, ASNC FAMILY"/>
    <property type="match status" value="1"/>
</dbReference>
<dbReference type="Pfam" id="PF22482">
    <property type="entry name" value="AsnC_trans_reg_3"/>
    <property type="match status" value="1"/>
</dbReference>
<dbReference type="Pfam" id="PF13412">
    <property type="entry name" value="HTH_24"/>
    <property type="match status" value="1"/>
</dbReference>
<dbReference type="PRINTS" id="PR00033">
    <property type="entry name" value="HTHASNC"/>
</dbReference>
<dbReference type="SMART" id="SM00344">
    <property type="entry name" value="HTH_ASNC"/>
    <property type="match status" value="1"/>
</dbReference>
<dbReference type="SUPFAM" id="SSF46785">
    <property type="entry name" value="Winged helix' DNA-binding domain"/>
    <property type="match status" value="1"/>
</dbReference>
<dbReference type="PROSITE" id="PS50956">
    <property type="entry name" value="HTH_ASNC_2"/>
    <property type="match status" value="1"/>
</dbReference>
<gene>
    <name type="ordered locus">PH1013</name>
</gene>
<name>REG4_PYRHO</name>
<keyword id="KW-0238">DNA-binding</keyword>
<keyword id="KW-0804">Transcription</keyword>
<keyword id="KW-0805">Transcription regulation</keyword>
<reference key="1">
    <citation type="journal article" date="1998" name="DNA Res.">
        <title>Complete sequence and gene organization of the genome of a hyper-thermophilic archaebacterium, Pyrococcus horikoshii OT3.</title>
        <authorList>
            <person name="Kawarabayasi Y."/>
            <person name="Sawada M."/>
            <person name="Horikawa H."/>
            <person name="Haikawa Y."/>
            <person name="Hino Y."/>
            <person name="Yamamoto S."/>
            <person name="Sekine M."/>
            <person name="Baba S."/>
            <person name="Kosugi H."/>
            <person name="Hosoyama A."/>
            <person name="Nagai Y."/>
            <person name="Sakai M."/>
            <person name="Ogura K."/>
            <person name="Otsuka R."/>
            <person name="Nakazawa H."/>
            <person name="Takamiya M."/>
            <person name="Ohfuku Y."/>
            <person name="Funahashi T."/>
            <person name="Tanaka T."/>
            <person name="Kudoh Y."/>
            <person name="Yamazaki J."/>
            <person name="Kushida N."/>
            <person name="Oguchi A."/>
            <person name="Aoki K."/>
            <person name="Yoshizawa T."/>
            <person name="Nakamura Y."/>
            <person name="Robb F.T."/>
            <person name="Horikoshi K."/>
            <person name="Masuchi Y."/>
            <person name="Shizuya H."/>
            <person name="Kikuchi H."/>
        </authorList>
    </citation>
    <scope>NUCLEOTIDE SEQUENCE [LARGE SCALE GENOMIC DNA]</scope>
    <source>
        <strain>ATCC 700860 / DSM 12428 / JCM 9974 / NBRC 100139 / OT-3</strain>
    </source>
</reference>
<proteinExistence type="predicted"/>
<evidence type="ECO:0000255" key="1">
    <source>
        <dbReference type="PROSITE-ProRule" id="PRU00319"/>
    </source>
</evidence>
<organism>
    <name type="scientific">Pyrococcus horikoshii (strain ATCC 700860 / DSM 12428 / JCM 9974 / NBRC 100139 / OT-3)</name>
    <dbReference type="NCBI Taxonomy" id="70601"/>
    <lineage>
        <taxon>Archaea</taxon>
        <taxon>Methanobacteriati</taxon>
        <taxon>Methanobacteriota</taxon>
        <taxon>Thermococci</taxon>
        <taxon>Thermococcales</taxon>
        <taxon>Thermococcaceae</taxon>
        <taxon>Pyrococcus</taxon>
    </lineage>
</organism>